<comment type="function">
    <text evidence="1 3 4">Transcription coactivator that plays a role in the regulation of cell expansion in leaf and cotyledons tissues (By similarity). Component of a network formed by miR396, the GRFs and their interacting factors (GIFs) acting in the regulation of meristem function, at least partially through the control of cell proliferation (By similarity). GIFs are involved in the positive regulation of cell proliferation of lateral organs in a functionally redundant manner.</text>
</comment>
<comment type="subunit">
    <text evidence="3">Interacts with GRF1.</text>
</comment>
<comment type="interaction">
    <interactant intactId="EBI-1396863">
        <id>Q9MAL9</id>
    </interactant>
    <interactant intactId="EBI-1396842">
        <id>O81001</id>
        <label>GRF1</label>
    </interactant>
    <organismsDiffer>false</organismsDiffer>
    <experiments>4</experiments>
</comment>
<comment type="interaction">
    <interactant intactId="EBI-1396863">
        <id>Q9MAL9</id>
    </interactant>
    <interactant intactId="EBI-1396893">
        <id>Q8L8A8</id>
        <label>GRF2</label>
    </interactant>
    <organismsDiffer>false</organismsDiffer>
    <experiments>3</experiments>
</comment>
<comment type="interaction">
    <interactant intactId="EBI-1396863">
        <id>Q9MAL9</id>
    </interactant>
    <interactant intactId="EBI-1396671">
        <id>Q8L8A7</id>
        <label>GRF4</label>
    </interactant>
    <organismsDiffer>false</organismsDiffer>
    <experiments>3</experiments>
</comment>
<comment type="interaction">
    <interactant intactId="EBI-1396863">
        <id>Q9MAL9</id>
    </interactant>
    <interactant intactId="EBI-1396652">
        <id>Q8L8A6</id>
        <label>GRF5</label>
    </interactant>
    <organismsDiffer>false</organismsDiffer>
    <experiments>3</experiments>
</comment>
<comment type="interaction">
    <interactant intactId="EBI-1396863">
        <id>Q9MAL9</id>
    </interactant>
    <interactant intactId="EBI-15193797">
        <id>Q9ZQ12</id>
        <label>GRF6</label>
    </interactant>
    <organismsDiffer>false</organismsDiffer>
    <experiments>3</experiments>
</comment>
<comment type="interaction">
    <interactant intactId="EBI-1396863">
        <id>Q9MAL9</id>
    </interactant>
    <interactant intactId="EBI-1396638">
        <id>Q8S9M3</id>
        <label>GRF9</label>
    </interactant>
    <organismsDiffer>false</organismsDiffer>
    <experiments>3</experiments>
</comment>
<comment type="interaction">
    <interactant intactId="EBI-1396863">
        <id>Q9MAL9</id>
    </interactant>
    <interactant intactId="EBI-15193011">
        <id>Q9LM84</id>
        <label>WOX14</label>
    </interactant>
    <organismsDiffer>false</organismsDiffer>
    <experiments>3</experiments>
</comment>
<comment type="alternative products">
    <event type="alternative splicing"/>
    <isoform>
        <id>Q9MAL9-1</id>
        <name>1</name>
        <sequence type="displayed"/>
    </isoform>
    <text>A number of isoforms are produced. According to EST sequences.</text>
</comment>
<comment type="tissue specificity">
    <text evidence="3">Predominantly expressed in shoot tips containing the shoot apical meristem (SAM) and flower buds. Also expressed in mature flowers.</text>
</comment>
<comment type="similarity">
    <text evidence="5">Belongs to the SS18 family.</text>
</comment>
<sequence length="195" mass="21039">MQQQQSPQMFPMVPSIPPANNITTEQIQKYLDENKKLIMAIMENQNLGKLAECAQYQALLQKNLMYLAAIADAQPPPPTPGPSPSTAVAAQMATPHSGMQPPSYFMQHPQASPAGIFAPRGPLQFGSPLQFQDPQQQQQIHQQAMQGHMGIRPMGMTNNGMQHAMQQPETGLGGNVGLRGGKQDGADGQGKDDGK</sequence>
<dbReference type="EMBL" id="AY102640">
    <property type="protein sequence ID" value="AAM52882.1"/>
    <property type="molecule type" value="mRNA"/>
</dbReference>
<dbReference type="EMBL" id="AC007323">
    <property type="protein sequence ID" value="AAF26463.1"/>
    <property type="molecule type" value="Genomic_DNA"/>
</dbReference>
<dbReference type="EMBL" id="CP002684">
    <property type="protein sequence ID" value="AEE27247.1"/>
    <property type="molecule type" value="Genomic_DNA"/>
</dbReference>
<dbReference type="EMBL" id="AF410307">
    <property type="protein sequence ID" value="AAK95293.1"/>
    <property type="molecule type" value="mRNA"/>
</dbReference>
<dbReference type="EMBL" id="AY102133">
    <property type="protein sequence ID" value="AAM26700.1"/>
    <property type="molecule type" value="mRNA"/>
</dbReference>
<dbReference type="PIR" id="H86141">
    <property type="entry name" value="H86141"/>
</dbReference>
<dbReference type="RefSeq" id="NP_563619.1">
    <molecule id="Q9MAL9-1"/>
    <property type="nucleotide sequence ID" value="NM_099998.4"/>
</dbReference>
<dbReference type="SMR" id="Q9MAL9"/>
<dbReference type="BioGRID" id="24513">
    <property type="interactions" value="23"/>
</dbReference>
<dbReference type="ComplexPortal" id="CPX-7723">
    <property type="entry name" value="BRAHMA SWI/SNF ATP-dependent chromatin remodeling complex"/>
</dbReference>
<dbReference type="ComplexPortal" id="CPX-7726">
    <property type="entry name" value="SYD-associated SWI/SNF ATP-dependent chromatin remodeling complex"/>
</dbReference>
<dbReference type="FunCoup" id="Q9MAL9">
    <property type="interactions" value="605"/>
</dbReference>
<dbReference type="IntAct" id="Q9MAL9">
    <property type="interactions" value="23"/>
</dbReference>
<dbReference type="STRING" id="3702.Q9MAL9"/>
<dbReference type="GlyGen" id="Q9MAL9">
    <property type="glycosylation" value="1 site"/>
</dbReference>
<dbReference type="ProteomicsDB" id="220661">
    <molecule id="Q9MAL9-1"/>
</dbReference>
<dbReference type="EnsemblPlants" id="AT1G01160.1">
    <molecule id="Q9MAL9-1"/>
    <property type="protein sequence ID" value="AT1G01160.1"/>
    <property type="gene ID" value="AT1G01160"/>
</dbReference>
<dbReference type="GeneID" id="839278"/>
<dbReference type="Gramene" id="AT1G01160.1">
    <molecule id="Q9MAL9-1"/>
    <property type="protein sequence ID" value="AT1G01160.1"/>
    <property type="gene ID" value="AT1G01160"/>
</dbReference>
<dbReference type="KEGG" id="ath:AT1G01160"/>
<dbReference type="Araport" id="AT1G01160"/>
<dbReference type="TAIR" id="AT1G01160">
    <property type="gene designation" value="GIF2"/>
</dbReference>
<dbReference type="HOGENOM" id="CLU_086253_1_0_1"/>
<dbReference type="InParanoid" id="Q9MAL9"/>
<dbReference type="OMA" id="GINNGMH"/>
<dbReference type="PhylomeDB" id="Q9MAL9"/>
<dbReference type="PRO" id="PR:Q9MAL9"/>
<dbReference type="Proteomes" id="UP000006548">
    <property type="component" value="Chromosome 1"/>
</dbReference>
<dbReference type="ExpressionAtlas" id="Q9MAL9">
    <property type="expression patterns" value="baseline and differential"/>
</dbReference>
<dbReference type="InterPro" id="IPR007726">
    <property type="entry name" value="SS18_N"/>
</dbReference>
<dbReference type="Pfam" id="PF05030">
    <property type="entry name" value="SSXT"/>
    <property type="match status" value="1"/>
</dbReference>
<gene>
    <name type="primary">GIF2</name>
    <name type="ordered locus">At1g01160</name>
    <name type="ORF">F6F3_1</name>
    <name type="ORF">T25K16.15</name>
</gene>
<proteinExistence type="evidence at protein level"/>
<feature type="chain" id="PRO_0000419319" description="GRF1-interacting factor 2">
    <location>
        <begin position="1"/>
        <end position="195"/>
    </location>
</feature>
<feature type="region of interest" description="Disordered" evidence="2">
    <location>
        <begin position="166"/>
        <end position="195"/>
    </location>
</feature>
<feature type="compositionally biased region" description="Gly residues" evidence="2">
    <location>
        <begin position="171"/>
        <end position="180"/>
    </location>
</feature>
<feature type="compositionally biased region" description="Basic and acidic residues" evidence="2">
    <location>
        <begin position="181"/>
        <end position="195"/>
    </location>
</feature>
<keyword id="KW-0010">Activator</keyword>
<keyword id="KW-0025">Alternative splicing</keyword>
<keyword id="KW-1185">Reference proteome</keyword>
<keyword id="KW-0804">Transcription</keyword>
<keyword id="KW-0805">Transcription regulation</keyword>
<accession>Q9MAL9</accession>
<organism>
    <name type="scientific">Arabidopsis thaliana</name>
    <name type="common">Mouse-ear cress</name>
    <dbReference type="NCBI Taxonomy" id="3702"/>
    <lineage>
        <taxon>Eukaryota</taxon>
        <taxon>Viridiplantae</taxon>
        <taxon>Streptophyta</taxon>
        <taxon>Embryophyta</taxon>
        <taxon>Tracheophyta</taxon>
        <taxon>Spermatophyta</taxon>
        <taxon>Magnoliopsida</taxon>
        <taxon>eudicotyledons</taxon>
        <taxon>Gunneridae</taxon>
        <taxon>Pentapetalae</taxon>
        <taxon>rosids</taxon>
        <taxon>malvids</taxon>
        <taxon>Brassicales</taxon>
        <taxon>Brassicaceae</taxon>
        <taxon>Camelineae</taxon>
        <taxon>Arabidopsis</taxon>
    </lineage>
</organism>
<name>GIF2_ARATH</name>
<protein>
    <recommendedName>
        <fullName>GRF1-interacting factor 2</fullName>
        <shortName>AtGIF2</shortName>
    </recommendedName>
    <alternativeName>
        <fullName>Transcription coactivator GIF2</fullName>
    </alternativeName>
</protein>
<reference key="1">
    <citation type="journal article" date="2004" name="Proc. Natl. Acad. Sci. U.S.A.">
        <title>A transcriptional coactivator, AtGIF1, is involved in regulating leaf growth and morphology in Arabidopsis.</title>
        <authorList>
            <person name="Kim J.H."/>
            <person name="Kende H."/>
        </authorList>
    </citation>
    <scope>NUCLEOTIDE SEQUENCE [MRNA]</scope>
    <scope>FUNCTION</scope>
    <scope>INTERACTION WITH GRF1</scope>
    <scope>TISSUE SPECIFICITY</scope>
</reference>
<reference key="2">
    <citation type="journal article" date="2000" name="Nature">
        <title>Sequence and analysis of chromosome 1 of the plant Arabidopsis thaliana.</title>
        <authorList>
            <person name="Theologis A."/>
            <person name="Ecker J.R."/>
            <person name="Palm C.J."/>
            <person name="Federspiel N.A."/>
            <person name="Kaul S."/>
            <person name="White O."/>
            <person name="Alonso J."/>
            <person name="Altafi H."/>
            <person name="Araujo R."/>
            <person name="Bowman C.L."/>
            <person name="Brooks S.Y."/>
            <person name="Buehler E."/>
            <person name="Chan A."/>
            <person name="Chao Q."/>
            <person name="Chen H."/>
            <person name="Cheuk R.F."/>
            <person name="Chin C.W."/>
            <person name="Chung M.K."/>
            <person name="Conn L."/>
            <person name="Conway A.B."/>
            <person name="Conway A.R."/>
            <person name="Creasy T.H."/>
            <person name="Dewar K."/>
            <person name="Dunn P."/>
            <person name="Etgu P."/>
            <person name="Feldblyum T.V."/>
            <person name="Feng J.-D."/>
            <person name="Fong B."/>
            <person name="Fujii C.Y."/>
            <person name="Gill J.E."/>
            <person name="Goldsmith A.D."/>
            <person name="Haas B."/>
            <person name="Hansen N.F."/>
            <person name="Hughes B."/>
            <person name="Huizar L."/>
            <person name="Hunter J.L."/>
            <person name="Jenkins J."/>
            <person name="Johnson-Hopson C."/>
            <person name="Khan S."/>
            <person name="Khaykin E."/>
            <person name="Kim C.J."/>
            <person name="Koo H.L."/>
            <person name="Kremenetskaia I."/>
            <person name="Kurtz D.B."/>
            <person name="Kwan A."/>
            <person name="Lam B."/>
            <person name="Langin-Hooper S."/>
            <person name="Lee A."/>
            <person name="Lee J.M."/>
            <person name="Lenz C.A."/>
            <person name="Li J.H."/>
            <person name="Li Y.-P."/>
            <person name="Lin X."/>
            <person name="Liu S.X."/>
            <person name="Liu Z.A."/>
            <person name="Luros J.S."/>
            <person name="Maiti R."/>
            <person name="Marziali A."/>
            <person name="Militscher J."/>
            <person name="Miranda M."/>
            <person name="Nguyen M."/>
            <person name="Nierman W.C."/>
            <person name="Osborne B.I."/>
            <person name="Pai G."/>
            <person name="Peterson J."/>
            <person name="Pham P.K."/>
            <person name="Rizzo M."/>
            <person name="Rooney T."/>
            <person name="Rowley D."/>
            <person name="Sakano H."/>
            <person name="Salzberg S.L."/>
            <person name="Schwartz J.R."/>
            <person name="Shinn P."/>
            <person name="Southwick A.M."/>
            <person name="Sun H."/>
            <person name="Tallon L.J."/>
            <person name="Tambunga G."/>
            <person name="Toriumi M.J."/>
            <person name="Town C.D."/>
            <person name="Utterback T."/>
            <person name="Van Aken S."/>
            <person name="Vaysberg M."/>
            <person name="Vysotskaia V.S."/>
            <person name="Walker M."/>
            <person name="Wu D."/>
            <person name="Yu G."/>
            <person name="Fraser C.M."/>
            <person name="Venter J.C."/>
            <person name="Davis R.W."/>
        </authorList>
    </citation>
    <scope>NUCLEOTIDE SEQUENCE [LARGE SCALE GENOMIC DNA]</scope>
    <source>
        <strain>cv. Columbia</strain>
    </source>
</reference>
<reference key="3">
    <citation type="journal article" date="2017" name="Plant J.">
        <title>Araport11: a complete reannotation of the Arabidopsis thaliana reference genome.</title>
        <authorList>
            <person name="Cheng C.Y."/>
            <person name="Krishnakumar V."/>
            <person name="Chan A.P."/>
            <person name="Thibaud-Nissen F."/>
            <person name="Schobel S."/>
            <person name="Town C.D."/>
        </authorList>
    </citation>
    <scope>GENOME REANNOTATION</scope>
    <source>
        <strain>cv. Columbia</strain>
    </source>
</reference>
<reference key="4">
    <citation type="journal article" date="2003" name="Science">
        <title>Empirical analysis of transcriptional activity in the Arabidopsis genome.</title>
        <authorList>
            <person name="Yamada K."/>
            <person name="Lim J."/>
            <person name="Dale J.M."/>
            <person name="Chen H."/>
            <person name="Shinn P."/>
            <person name="Palm C.J."/>
            <person name="Southwick A.M."/>
            <person name="Wu H.C."/>
            <person name="Kim C.J."/>
            <person name="Nguyen M."/>
            <person name="Pham P.K."/>
            <person name="Cheuk R.F."/>
            <person name="Karlin-Newmann G."/>
            <person name="Liu S.X."/>
            <person name="Lam B."/>
            <person name="Sakano H."/>
            <person name="Wu T."/>
            <person name="Yu G."/>
            <person name="Miranda M."/>
            <person name="Quach H.L."/>
            <person name="Tripp M."/>
            <person name="Chang C.H."/>
            <person name="Lee J.M."/>
            <person name="Toriumi M.J."/>
            <person name="Chan M.M."/>
            <person name="Tang C.C."/>
            <person name="Onodera C.S."/>
            <person name="Deng J.M."/>
            <person name="Akiyama K."/>
            <person name="Ansari Y."/>
            <person name="Arakawa T."/>
            <person name="Banh J."/>
            <person name="Banno F."/>
            <person name="Bowser L."/>
            <person name="Brooks S.Y."/>
            <person name="Carninci P."/>
            <person name="Chao Q."/>
            <person name="Choy N."/>
            <person name="Enju A."/>
            <person name="Goldsmith A.D."/>
            <person name="Gurjal M."/>
            <person name="Hansen N.F."/>
            <person name="Hayashizaki Y."/>
            <person name="Johnson-Hopson C."/>
            <person name="Hsuan V.W."/>
            <person name="Iida K."/>
            <person name="Karnes M."/>
            <person name="Khan S."/>
            <person name="Koesema E."/>
            <person name="Ishida J."/>
            <person name="Jiang P.X."/>
            <person name="Jones T."/>
            <person name="Kawai J."/>
            <person name="Kamiya A."/>
            <person name="Meyers C."/>
            <person name="Nakajima M."/>
            <person name="Narusaka M."/>
            <person name="Seki M."/>
            <person name="Sakurai T."/>
            <person name="Satou M."/>
            <person name="Tamse R."/>
            <person name="Vaysberg M."/>
            <person name="Wallender E.K."/>
            <person name="Wong C."/>
            <person name="Yamamura Y."/>
            <person name="Yuan S."/>
            <person name="Shinozaki K."/>
            <person name="Davis R.W."/>
            <person name="Theologis A."/>
            <person name="Ecker J.R."/>
        </authorList>
    </citation>
    <scope>NUCLEOTIDE SEQUENCE [LARGE SCALE MRNA]</scope>
    <source>
        <strain>cv. Columbia</strain>
    </source>
</reference>
<reference key="5">
    <citation type="journal article" date="2009" name="Plant Physiol.">
        <title>The Arabidopsis GRF-INTERACTING FACTOR gene family performs an overlapping function in determining organ size as well as multiple developmental properties.</title>
        <authorList>
            <person name="Lee B.H."/>
            <person name="Ko J.H."/>
            <person name="Lee S."/>
            <person name="Lee Y."/>
            <person name="Pak J.H."/>
            <person name="Kim J.H."/>
        </authorList>
    </citation>
    <scope>GENE FAMILY</scope>
    <scope>FUNCTION</scope>
</reference>
<evidence type="ECO:0000250" key="1"/>
<evidence type="ECO:0000256" key="2">
    <source>
        <dbReference type="SAM" id="MobiDB-lite"/>
    </source>
</evidence>
<evidence type="ECO:0000269" key="3">
    <source>
    </source>
</evidence>
<evidence type="ECO:0000269" key="4">
    <source>
    </source>
</evidence>
<evidence type="ECO:0000305" key="5"/>